<protein>
    <recommendedName>
        <fullName evidence="1">Glycerol-3-phosphate acyltransferase</fullName>
    </recommendedName>
    <alternativeName>
        <fullName evidence="1">Acyl-PO4 G3P acyltransferase</fullName>
    </alternativeName>
    <alternativeName>
        <fullName evidence="1">Acyl-phosphate--glycerol-3-phosphate acyltransferase</fullName>
    </alternativeName>
    <alternativeName>
        <fullName evidence="1">G3P acyltransferase</fullName>
        <shortName evidence="1">GPAT</shortName>
        <ecNumber evidence="1">2.3.1.275</ecNumber>
    </alternativeName>
    <alternativeName>
        <fullName evidence="1">Lysophosphatidic acid synthase</fullName>
        <shortName evidence="1">LPA synthase</shortName>
    </alternativeName>
</protein>
<dbReference type="EC" id="2.3.1.275" evidence="1"/>
<dbReference type="EMBL" id="CP000825">
    <property type="protein sequence ID" value="ABV51169.1"/>
    <property type="molecule type" value="Genomic_DNA"/>
</dbReference>
<dbReference type="RefSeq" id="WP_012008211.1">
    <property type="nucleotide sequence ID" value="NC_009840.1"/>
</dbReference>
<dbReference type="SMR" id="A8G6D8"/>
<dbReference type="STRING" id="93060.P9215_15561"/>
<dbReference type="KEGG" id="pmh:P9215_15561"/>
<dbReference type="eggNOG" id="COG0344">
    <property type="taxonomic scope" value="Bacteria"/>
</dbReference>
<dbReference type="HOGENOM" id="CLU_081254_7_1_3"/>
<dbReference type="OrthoDB" id="9777124at2"/>
<dbReference type="UniPathway" id="UPA00085"/>
<dbReference type="Proteomes" id="UP000002014">
    <property type="component" value="Chromosome"/>
</dbReference>
<dbReference type="GO" id="GO:0005886">
    <property type="term" value="C:plasma membrane"/>
    <property type="evidence" value="ECO:0007669"/>
    <property type="project" value="UniProtKB-SubCell"/>
</dbReference>
<dbReference type="GO" id="GO:0043772">
    <property type="term" value="F:acyl-phosphate glycerol-3-phosphate acyltransferase activity"/>
    <property type="evidence" value="ECO:0007669"/>
    <property type="project" value="UniProtKB-UniRule"/>
</dbReference>
<dbReference type="GO" id="GO:0008654">
    <property type="term" value="P:phospholipid biosynthetic process"/>
    <property type="evidence" value="ECO:0007669"/>
    <property type="project" value="UniProtKB-UniRule"/>
</dbReference>
<dbReference type="HAMAP" id="MF_01043">
    <property type="entry name" value="PlsY"/>
    <property type="match status" value="1"/>
</dbReference>
<dbReference type="InterPro" id="IPR003811">
    <property type="entry name" value="G3P_acylTferase_PlsY"/>
</dbReference>
<dbReference type="NCBIfam" id="TIGR00023">
    <property type="entry name" value="glycerol-3-phosphate 1-O-acyltransferase PlsY"/>
    <property type="match status" value="1"/>
</dbReference>
<dbReference type="PANTHER" id="PTHR30309:SF0">
    <property type="entry name" value="GLYCEROL-3-PHOSPHATE ACYLTRANSFERASE-RELATED"/>
    <property type="match status" value="1"/>
</dbReference>
<dbReference type="PANTHER" id="PTHR30309">
    <property type="entry name" value="INNER MEMBRANE PROTEIN YGIH"/>
    <property type="match status" value="1"/>
</dbReference>
<dbReference type="Pfam" id="PF02660">
    <property type="entry name" value="G3P_acyltransf"/>
    <property type="match status" value="1"/>
</dbReference>
<dbReference type="SMART" id="SM01207">
    <property type="entry name" value="G3P_acyltransf"/>
    <property type="match status" value="1"/>
</dbReference>
<keyword id="KW-0997">Cell inner membrane</keyword>
<keyword id="KW-1003">Cell membrane</keyword>
<keyword id="KW-0444">Lipid biosynthesis</keyword>
<keyword id="KW-0443">Lipid metabolism</keyword>
<keyword id="KW-0472">Membrane</keyword>
<keyword id="KW-0594">Phospholipid biosynthesis</keyword>
<keyword id="KW-1208">Phospholipid metabolism</keyword>
<keyword id="KW-0808">Transferase</keyword>
<keyword id="KW-0812">Transmembrane</keyword>
<keyword id="KW-1133">Transmembrane helix</keyword>
<accession>A8G6D8</accession>
<gene>
    <name evidence="1" type="primary">plsY</name>
    <name type="ordered locus">P9215_15561</name>
</gene>
<reference key="1">
    <citation type="journal article" date="2007" name="PLoS Genet.">
        <title>Patterns and implications of gene gain and loss in the evolution of Prochlorococcus.</title>
        <authorList>
            <person name="Kettler G.C."/>
            <person name="Martiny A.C."/>
            <person name="Huang K."/>
            <person name="Zucker J."/>
            <person name="Coleman M.L."/>
            <person name="Rodrigue S."/>
            <person name="Chen F."/>
            <person name="Lapidus A."/>
            <person name="Ferriera S."/>
            <person name="Johnson J."/>
            <person name="Steglich C."/>
            <person name="Church G.M."/>
            <person name="Richardson P."/>
            <person name="Chisholm S.W."/>
        </authorList>
    </citation>
    <scope>NUCLEOTIDE SEQUENCE [LARGE SCALE GENOMIC DNA]</scope>
    <source>
        <strain>MIT 9215</strain>
    </source>
</reference>
<evidence type="ECO:0000255" key="1">
    <source>
        <dbReference type="HAMAP-Rule" id="MF_01043"/>
    </source>
</evidence>
<proteinExistence type="inferred from homology"/>
<comment type="function">
    <text evidence="1">Catalyzes the transfer of an acyl group from acyl-phosphate (acyl-PO(4)) to glycerol-3-phosphate (G3P) to form lysophosphatidic acid (LPA). This enzyme utilizes acyl-phosphate as fatty acyl donor, but not acyl-CoA or acyl-ACP.</text>
</comment>
<comment type="catalytic activity">
    <reaction evidence="1">
        <text>an acyl phosphate + sn-glycerol 3-phosphate = a 1-acyl-sn-glycero-3-phosphate + phosphate</text>
        <dbReference type="Rhea" id="RHEA:34075"/>
        <dbReference type="ChEBI" id="CHEBI:43474"/>
        <dbReference type="ChEBI" id="CHEBI:57597"/>
        <dbReference type="ChEBI" id="CHEBI:57970"/>
        <dbReference type="ChEBI" id="CHEBI:59918"/>
        <dbReference type="EC" id="2.3.1.275"/>
    </reaction>
</comment>
<comment type="pathway">
    <text evidence="1">Lipid metabolism; phospholipid metabolism.</text>
</comment>
<comment type="subunit">
    <text evidence="1">Probably interacts with PlsX.</text>
</comment>
<comment type="subcellular location">
    <subcellularLocation>
        <location evidence="1">Cell inner membrane</location>
        <topology evidence="1">Multi-pass membrane protein</topology>
    </subcellularLocation>
</comment>
<comment type="similarity">
    <text evidence="1">Belongs to the PlsY family.</text>
</comment>
<sequence length="197" mass="21600">MNILIIFASYLLGSLPTGFLIGKYLKNIDLRTIGSGSTGATNVLRNVGKWPALFVFIIDVGKGFIAVKIAQYYTDQELIEVIAGISAISGHIWPIWLGGKGGKAVATGLGMFLALSWKVGLASLGIFLIVLTKTKFVSLSSISAAILLPIFMFFYLGEFIHTYFFISLIVALLVIWKHRTNITRLIKGEESKINQNQ</sequence>
<feature type="chain" id="PRO_1000064204" description="Glycerol-3-phosphate acyltransferase">
    <location>
        <begin position="1"/>
        <end position="197"/>
    </location>
</feature>
<feature type="transmembrane region" description="Helical" evidence="1">
    <location>
        <begin position="1"/>
        <end position="21"/>
    </location>
</feature>
<feature type="transmembrane region" description="Helical" evidence="1">
    <location>
        <begin position="78"/>
        <end position="98"/>
    </location>
</feature>
<feature type="transmembrane region" description="Helical" evidence="1">
    <location>
        <begin position="111"/>
        <end position="131"/>
    </location>
</feature>
<feature type="transmembrane region" description="Helical" evidence="1">
    <location>
        <begin position="136"/>
        <end position="155"/>
    </location>
</feature>
<feature type="transmembrane region" description="Helical" evidence="1">
    <location>
        <begin position="159"/>
        <end position="176"/>
    </location>
</feature>
<organism>
    <name type="scientific">Prochlorococcus marinus (strain MIT 9215)</name>
    <dbReference type="NCBI Taxonomy" id="93060"/>
    <lineage>
        <taxon>Bacteria</taxon>
        <taxon>Bacillati</taxon>
        <taxon>Cyanobacteriota</taxon>
        <taxon>Cyanophyceae</taxon>
        <taxon>Synechococcales</taxon>
        <taxon>Prochlorococcaceae</taxon>
        <taxon>Prochlorococcus</taxon>
    </lineage>
</organism>
<name>PLSY_PROM2</name>